<proteinExistence type="evidence at transcript level"/>
<dbReference type="EC" id="7.1.1.-"/>
<dbReference type="EMBL" id="AY178864">
    <property type="protein sequence ID" value="AAP29437.2"/>
    <property type="molecule type" value="Genomic_DNA"/>
</dbReference>
<dbReference type="RefSeq" id="NP_848106.3">
    <property type="nucleotide sequence ID" value="NC_004766.1"/>
</dbReference>
<dbReference type="SMR" id="Q85FH9"/>
<dbReference type="GeneID" id="807413"/>
<dbReference type="GO" id="GO:0009535">
    <property type="term" value="C:chloroplast thylakoid membrane"/>
    <property type="evidence" value="ECO:0007669"/>
    <property type="project" value="UniProtKB-SubCell"/>
</dbReference>
<dbReference type="GO" id="GO:0008137">
    <property type="term" value="F:NADH dehydrogenase (ubiquinone) activity"/>
    <property type="evidence" value="ECO:0007669"/>
    <property type="project" value="InterPro"/>
</dbReference>
<dbReference type="GO" id="GO:0048038">
    <property type="term" value="F:quinone binding"/>
    <property type="evidence" value="ECO:0007669"/>
    <property type="project" value="UniProtKB-KW"/>
</dbReference>
<dbReference type="GO" id="GO:0042773">
    <property type="term" value="P:ATP synthesis coupled electron transport"/>
    <property type="evidence" value="ECO:0007669"/>
    <property type="project" value="InterPro"/>
</dbReference>
<dbReference type="GO" id="GO:0015990">
    <property type="term" value="P:electron transport coupled proton transport"/>
    <property type="evidence" value="ECO:0007669"/>
    <property type="project" value="TreeGrafter"/>
</dbReference>
<dbReference type="Gene3D" id="1.20.5.2700">
    <property type="match status" value="1"/>
</dbReference>
<dbReference type="InterPro" id="IPR002128">
    <property type="entry name" value="NADH_UbQ_OxRdtase_chlpt_su5_C"/>
</dbReference>
<dbReference type="InterPro" id="IPR018393">
    <property type="entry name" value="NADHpl_OxRdtase_5_subgr"/>
</dbReference>
<dbReference type="InterPro" id="IPR001750">
    <property type="entry name" value="ND/Mrp_TM"/>
</dbReference>
<dbReference type="InterPro" id="IPR003945">
    <property type="entry name" value="NU5C-like"/>
</dbReference>
<dbReference type="InterPro" id="IPR001516">
    <property type="entry name" value="Proton_antipo_N"/>
</dbReference>
<dbReference type="NCBIfam" id="TIGR01974">
    <property type="entry name" value="NDH_I_L"/>
    <property type="match status" value="1"/>
</dbReference>
<dbReference type="NCBIfam" id="NF005141">
    <property type="entry name" value="PRK06590.1"/>
    <property type="match status" value="1"/>
</dbReference>
<dbReference type="PANTHER" id="PTHR42829">
    <property type="entry name" value="NADH-UBIQUINONE OXIDOREDUCTASE CHAIN 5"/>
    <property type="match status" value="1"/>
</dbReference>
<dbReference type="PANTHER" id="PTHR42829:SF2">
    <property type="entry name" value="NADH-UBIQUINONE OXIDOREDUCTASE CHAIN 5"/>
    <property type="match status" value="1"/>
</dbReference>
<dbReference type="Pfam" id="PF01010">
    <property type="entry name" value="Proton_antipo_C"/>
    <property type="match status" value="1"/>
</dbReference>
<dbReference type="Pfam" id="PF00361">
    <property type="entry name" value="Proton_antipo_M"/>
    <property type="match status" value="1"/>
</dbReference>
<dbReference type="Pfam" id="PF00662">
    <property type="entry name" value="Proton_antipo_N"/>
    <property type="match status" value="1"/>
</dbReference>
<dbReference type="PRINTS" id="PR01434">
    <property type="entry name" value="NADHDHGNASE5"/>
</dbReference>
<dbReference type="PRINTS" id="PR01435">
    <property type="entry name" value="NPOXDRDTASE5"/>
</dbReference>
<gene>
    <name type="primary">ndhF</name>
</gene>
<protein>
    <recommendedName>
        <fullName>NAD(P)H-quinone oxidoreductase subunit 5, chloroplastic</fullName>
        <ecNumber>7.1.1.-</ecNumber>
    </recommendedName>
    <alternativeName>
        <fullName>NAD(P)H dehydrogenase subunit 5</fullName>
    </alternativeName>
    <alternativeName>
        <fullName>NADH-plastoquinone oxidoreductase subunit 5</fullName>
    </alternativeName>
</protein>
<evidence type="ECO:0000250" key="1"/>
<evidence type="ECO:0000255" key="2"/>
<evidence type="ECO:0000269" key="3">
    <source>
    </source>
</evidence>
<evidence type="ECO:0000305" key="4"/>
<reference key="1">
    <citation type="journal article" date="2003" name="DNA Res.">
        <title>Complete nucleotide sequence of the chloroplast genome from a leptosporangiate fern, Adiantum capillus-veneris L.</title>
        <authorList>
            <person name="Wolf P.G."/>
            <person name="Rowe C.A."/>
            <person name="Sinclair R.B."/>
            <person name="Hasebe M."/>
        </authorList>
    </citation>
    <scope>NUCLEOTIDE SEQUENCE [LARGE SCALE GENOMIC DNA]</scope>
</reference>
<reference key="2">
    <citation type="journal article" date="2004" name="Gene">
        <title>High levels of RNA editing in a vascular plant chloroplast genome: analysis of transcripts from the fern Adiantum capillus-veneris.</title>
        <authorList>
            <person name="Wolf P.G."/>
            <person name="Rowe C.A."/>
            <person name="Hasebe M."/>
        </authorList>
    </citation>
    <scope>NUCLEOTIDE SEQUENCE [GENOMIC DNA]</scope>
    <scope>RNA EDITING</scope>
    <source>
        <tissue>Frond</tissue>
    </source>
</reference>
<organism>
    <name type="scientific">Adiantum capillus-veneris</name>
    <name type="common">Maidenhair fern</name>
    <dbReference type="NCBI Taxonomy" id="13818"/>
    <lineage>
        <taxon>Eukaryota</taxon>
        <taxon>Viridiplantae</taxon>
        <taxon>Streptophyta</taxon>
        <taxon>Embryophyta</taxon>
        <taxon>Tracheophyta</taxon>
        <taxon>Polypodiopsida</taxon>
        <taxon>Polypodiidae</taxon>
        <taxon>Polypodiales</taxon>
        <taxon>Pteridineae</taxon>
        <taxon>Pteridaceae</taxon>
        <taxon>Vittarioideae</taxon>
        <taxon>Adiantum</taxon>
    </lineage>
</organism>
<name>NU5C_ADICA</name>
<feature type="chain" id="PRO_0000118165" description="NAD(P)H-quinone oxidoreductase subunit 5, chloroplastic">
    <location>
        <begin position="1"/>
        <end position="729"/>
    </location>
</feature>
<feature type="transmembrane region" description="Helical" evidence="2">
    <location>
        <begin position="9"/>
        <end position="29"/>
    </location>
</feature>
<feature type="transmembrane region" description="Helical" evidence="2">
    <location>
        <begin position="39"/>
        <end position="59"/>
    </location>
</feature>
<feature type="transmembrane region" description="Helical" evidence="2">
    <location>
        <begin position="87"/>
        <end position="107"/>
    </location>
</feature>
<feature type="transmembrane region" description="Helical" evidence="2">
    <location>
        <begin position="125"/>
        <end position="145"/>
    </location>
</feature>
<feature type="transmembrane region" description="Helical" evidence="2">
    <location>
        <begin position="147"/>
        <end position="167"/>
    </location>
</feature>
<feature type="transmembrane region" description="Helical" evidence="2">
    <location>
        <begin position="184"/>
        <end position="204"/>
    </location>
</feature>
<feature type="transmembrane region" description="Helical" evidence="2">
    <location>
        <begin position="218"/>
        <end position="238"/>
    </location>
</feature>
<feature type="transmembrane region" description="Helical" evidence="2">
    <location>
        <begin position="258"/>
        <end position="278"/>
    </location>
</feature>
<feature type="transmembrane region" description="Helical" evidence="2">
    <location>
        <begin position="289"/>
        <end position="311"/>
    </location>
</feature>
<feature type="transmembrane region" description="Helical" evidence="2">
    <location>
        <begin position="327"/>
        <end position="347"/>
    </location>
</feature>
<feature type="transmembrane region" description="Helical" evidence="2">
    <location>
        <begin position="354"/>
        <end position="374"/>
    </location>
</feature>
<feature type="transmembrane region" description="Helical" evidence="2">
    <location>
        <begin position="395"/>
        <end position="415"/>
    </location>
</feature>
<feature type="transmembrane region" description="Helical" evidence="2">
    <location>
        <begin position="425"/>
        <end position="445"/>
    </location>
</feature>
<feature type="transmembrane region" description="Helical" evidence="2">
    <location>
        <begin position="540"/>
        <end position="560"/>
    </location>
</feature>
<feature type="transmembrane region" description="Helical" evidence="2">
    <location>
        <begin position="592"/>
        <end position="612"/>
    </location>
</feature>
<feature type="transmembrane region" description="Helical" evidence="2">
    <location>
        <begin position="627"/>
        <end position="646"/>
    </location>
</feature>
<feature type="transmembrane region" description="Helical" evidence="2">
    <location>
        <begin position="676"/>
        <end position="696"/>
    </location>
</feature>
<feature type="transmembrane region" description="Helical" evidence="2">
    <location>
        <begin position="708"/>
        <end position="728"/>
    </location>
</feature>
<geneLocation type="chloroplast"/>
<accession>Q85FH9</accession>
<keyword id="KW-0150">Chloroplast</keyword>
<keyword id="KW-0472">Membrane</keyword>
<keyword id="KW-0520">NAD</keyword>
<keyword id="KW-0521">NADP</keyword>
<keyword id="KW-0934">Plastid</keyword>
<keyword id="KW-0618">Plastoquinone</keyword>
<keyword id="KW-0874">Quinone</keyword>
<keyword id="KW-0691">RNA editing</keyword>
<keyword id="KW-0793">Thylakoid</keyword>
<keyword id="KW-1278">Translocase</keyword>
<keyword id="KW-0812">Transmembrane</keyword>
<keyword id="KW-1133">Transmembrane helix</keyword>
<keyword id="KW-0813">Transport</keyword>
<comment type="function">
    <text evidence="1">NDH shuttles electrons from NAD(P)H:plastoquinone, via FMN and iron-sulfur (Fe-S) centers, to quinones in the photosynthetic chain and possibly in a chloroplast respiratory chain. The immediate electron acceptor for the enzyme in this species is believed to be plastoquinone. Couples the redox reaction to proton translocation, and thus conserves the redox energy in a proton gradient (By similarity).</text>
</comment>
<comment type="catalytic activity">
    <reaction>
        <text>a plastoquinone + NADH + (n+1) H(+)(in) = a plastoquinol + NAD(+) + n H(+)(out)</text>
        <dbReference type="Rhea" id="RHEA:42608"/>
        <dbReference type="Rhea" id="RHEA-COMP:9561"/>
        <dbReference type="Rhea" id="RHEA-COMP:9562"/>
        <dbReference type="ChEBI" id="CHEBI:15378"/>
        <dbReference type="ChEBI" id="CHEBI:17757"/>
        <dbReference type="ChEBI" id="CHEBI:57540"/>
        <dbReference type="ChEBI" id="CHEBI:57945"/>
        <dbReference type="ChEBI" id="CHEBI:62192"/>
    </reaction>
</comment>
<comment type="catalytic activity">
    <reaction>
        <text>a plastoquinone + NADPH + (n+1) H(+)(in) = a plastoquinol + NADP(+) + n H(+)(out)</text>
        <dbReference type="Rhea" id="RHEA:42612"/>
        <dbReference type="Rhea" id="RHEA-COMP:9561"/>
        <dbReference type="Rhea" id="RHEA-COMP:9562"/>
        <dbReference type="ChEBI" id="CHEBI:15378"/>
        <dbReference type="ChEBI" id="CHEBI:17757"/>
        <dbReference type="ChEBI" id="CHEBI:57783"/>
        <dbReference type="ChEBI" id="CHEBI:58349"/>
        <dbReference type="ChEBI" id="CHEBI:62192"/>
    </reaction>
</comment>
<comment type="subunit">
    <text evidence="1">NDH is composed of at least 16 different subunits, 5 of which are encoded in the nucleus.</text>
</comment>
<comment type="subcellular location">
    <subcellularLocation>
        <location evidence="1">Plastid</location>
        <location evidence="1">Chloroplast thylakoid membrane</location>
        <topology evidence="1">Multi-pass membrane protein</topology>
    </subcellularLocation>
</comment>
<comment type="RNA editing">
    <location>
        <position position="13" evidence="3"/>
    </location>
    <location>
        <position position="52" evidence="3"/>
    </location>
    <location>
        <position position="138" evidence="3"/>
    </location>
    <location>
        <position position="211" evidence="3"/>
    </location>
    <location>
        <position position="332" evidence="3"/>
    </location>
    <location>
        <position position="400" evidence="3"/>
    </location>
    <text>The nonsense codon at position 211 is modified to a sense codon.</text>
</comment>
<comment type="similarity">
    <text evidence="4">Belongs to the complex I subunit 5 family.</text>
</comment>
<sequence>MKLSNEYAWIIPLCPLIASCCTGSLSFFFPRVARGFHRLCALLNVFSLAISMFVSLAIFQEQFVKNPIQQYLWIWIPRSTFCVEIGFLVDSLTLVMSLLVTTVGVLVMIYSDSYMCYDRGYTRFYAYLSLFTASMLGLVLSPNLIQLYVFWELVGMCSYLLVGFWFARSSAANACQKAFVTNRIGDFGLLLGILGIYWTTGSFEISELCDRFAKLKEIGFSNPILTNIIAFLLLAGPVAKSAQFPLHVWLPDAMEGPTPISALIHAATMVAAGIFFIARIYGLISTLPLVMQASSWLGGATALLGATLALAQRDLKKGLAYSTMSQLGYMVLALGIGAYQSALFHLVTHAYSKALLFLGAGSVIHSIEKVVGYSPNRSQNMFFMGGLRKYMPITGTTFLLGTLSLSGIPPLACFWSKDEIIHESWLSSLPLGILASGTAGLTAFYMFRIYLLTFEGDFCTIKTDWVDFNHFAPLSISMWGETEGNLSLNQINQNVASVRLGITKNKGFSSSYLANPNGITNVHYDQSLPKPKESSSAMTFSLVMLAIPTTLVGLLGINLIGETANFELSPEWLINPVHFFELSKSFNIYIKILLNSRSSLILSFFGIFFSFIIYKKSYKYFYITKKLVGFTKLVSKFGLLVQSWSLNRGYIDYYYDICFVRNLRSLSKSLSDFDRYGIDGFVNVIGALNFFGGEFIRYGENGRISYYLFIIIFGAILSSVLIFIFLPFP</sequence>